<keyword id="KW-0479">Metal-binding</keyword>
<keyword id="KW-1185">Reference proteome</keyword>
<keyword id="KW-0862">Zinc</keyword>
<keyword id="KW-0863">Zinc-finger</keyword>
<sequence length="190" mass="20820">MQLLMRVPSLPELGELDCNICFRPYNLGARAPRRLPGTARARCGHTLCTACLRELAARGDGSRTAARVVRLRRAVTCPFCRAPSPLPRGGVTEIALDPVLWSRLEEKARAEREGDPMGSPAKDSGEDGEDDDGEAESEKGAGPPSAGWRALRRILDRVLAPARRLRRPLPSNVLYCPEVKDIAHMTRCTL</sequence>
<feature type="chain" id="PRO_0000329084" description="RING finger protein 227">
    <location>
        <begin position="1"/>
        <end position="190"/>
    </location>
</feature>
<feature type="zinc finger region" description="RING-type" evidence="2">
    <location>
        <begin position="18"/>
        <end position="81"/>
    </location>
</feature>
<feature type="region of interest" description="Disordered" evidence="3">
    <location>
        <begin position="108"/>
        <end position="147"/>
    </location>
</feature>
<feature type="compositionally biased region" description="Acidic residues" evidence="3">
    <location>
        <begin position="126"/>
        <end position="135"/>
    </location>
</feature>
<feature type="sequence conflict" description="In Ref. 3; BAA95115." evidence="4" ref="3">
    <original>D</original>
    <variation>G</variation>
    <location>
        <position position="115"/>
    </location>
</feature>
<feature type="sequence conflict" description="In Ref. 3; BAA95115." evidence="4" ref="3">
    <original>A</original>
    <variation>E</variation>
    <location>
        <position position="160"/>
    </location>
</feature>
<gene>
    <name evidence="1" type="primary">Rnf227</name>
    <name evidence="6" type="synonym">Chd3os</name>
    <name evidence="5" type="ORF">MNCb-2875</name>
</gene>
<proteinExistence type="evidence at transcript level"/>
<protein>
    <recommendedName>
        <fullName evidence="4">RING finger protein 227</fullName>
    </recommendedName>
</protein>
<reference key="1">
    <citation type="journal article" date="2009" name="PLoS Biol.">
        <title>Lineage-specific biology revealed by a finished genome assembly of the mouse.</title>
        <authorList>
            <person name="Church D.M."/>
            <person name="Goodstadt L."/>
            <person name="Hillier L.W."/>
            <person name="Zody M.C."/>
            <person name="Goldstein S."/>
            <person name="She X."/>
            <person name="Bult C.J."/>
            <person name="Agarwala R."/>
            <person name="Cherry J.L."/>
            <person name="DiCuccio M."/>
            <person name="Hlavina W."/>
            <person name="Kapustin Y."/>
            <person name="Meric P."/>
            <person name="Maglott D."/>
            <person name="Birtle Z."/>
            <person name="Marques A.C."/>
            <person name="Graves T."/>
            <person name="Zhou S."/>
            <person name="Teague B."/>
            <person name="Potamousis K."/>
            <person name="Churas C."/>
            <person name="Place M."/>
            <person name="Herschleb J."/>
            <person name="Runnheim R."/>
            <person name="Forrest D."/>
            <person name="Amos-Landgraf J."/>
            <person name="Schwartz D.C."/>
            <person name="Cheng Z."/>
            <person name="Lindblad-Toh K."/>
            <person name="Eichler E.E."/>
            <person name="Ponting C.P."/>
        </authorList>
    </citation>
    <scope>NUCLEOTIDE SEQUENCE [LARGE SCALE GENOMIC DNA]</scope>
    <source>
        <strain>C57BL/6J</strain>
    </source>
</reference>
<reference key="2">
    <citation type="journal article" date="2005" name="Science">
        <title>The transcriptional landscape of the mammalian genome.</title>
        <authorList>
            <person name="Carninci P."/>
            <person name="Kasukawa T."/>
            <person name="Katayama S."/>
            <person name="Gough J."/>
            <person name="Frith M.C."/>
            <person name="Maeda N."/>
            <person name="Oyama R."/>
            <person name="Ravasi T."/>
            <person name="Lenhard B."/>
            <person name="Wells C."/>
            <person name="Kodzius R."/>
            <person name="Shimokawa K."/>
            <person name="Bajic V.B."/>
            <person name="Brenner S.E."/>
            <person name="Batalov S."/>
            <person name="Forrest A.R."/>
            <person name="Zavolan M."/>
            <person name="Davis M.J."/>
            <person name="Wilming L.G."/>
            <person name="Aidinis V."/>
            <person name="Allen J.E."/>
            <person name="Ambesi-Impiombato A."/>
            <person name="Apweiler R."/>
            <person name="Aturaliya R.N."/>
            <person name="Bailey T.L."/>
            <person name="Bansal M."/>
            <person name="Baxter L."/>
            <person name="Beisel K.W."/>
            <person name="Bersano T."/>
            <person name="Bono H."/>
            <person name="Chalk A.M."/>
            <person name="Chiu K.P."/>
            <person name="Choudhary V."/>
            <person name="Christoffels A."/>
            <person name="Clutterbuck D.R."/>
            <person name="Crowe M.L."/>
            <person name="Dalla E."/>
            <person name="Dalrymple B.P."/>
            <person name="de Bono B."/>
            <person name="Della Gatta G."/>
            <person name="di Bernardo D."/>
            <person name="Down T."/>
            <person name="Engstrom P."/>
            <person name="Fagiolini M."/>
            <person name="Faulkner G."/>
            <person name="Fletcher C.F."/>
            <person name="Fukushima T."/>
            <person name="Furuno M."/>
            <person name="Futaki S."/>
            <person name="Gariboldi M."/>
            <person name="Georgii-Hemming P."/>
            <person name="Gingeras T.R."/>
            <person name="Gojobori T."/>
            <person name="Green R.E."/>
            <person name="Gustincich S."/>
            <person name="Harbers M."/>
            <person name="Hayashi Y."/>
            <person name="Hensch T.K."/>
            <person name="Hirokawa N."/>
            <person name="Hill D."/>
            <person name="Huminiecki L."/>
            <person name="Iacono M."/>
            <person name="Ikeo K."/>
            <person name="Iwama A."/>
            <person name="Ishikawa T."/>
            <person name="Jakt M."/>
            <person name="Kanapin A."/>
            <person name="Katoh M."/>
            <person name="Kawasawa Y."/>
            <person name="Kelso J."/>
            <person name="Kitamura H."/>
            <person name="Kitano H."/>
            <person name="Kollias G."/>
            <person name="Krishnan S.P."/>
            <person name="Kruger A."/>
            <person name="Kummerfeld S.K."/>
            <person name="Kurochkin I.V."/>
            <person name="Lareau L.F."/>
            <person name="Lazarevic D."/>
            <person name="Lipovich L."/>
            <person name="Liu J."/>
            <person name="Liuni S."/>
            <person name="McWilliam S."/>
            <person name="Madan Babu M."/>
            <person name="Madera M."/>
            <person name="Marchionni L."/>
            <person name="Matsuda H."/>
            <person name="Matsuzawa S."/>
            <person name="Miki H."/>
            <person name="Mignone F."/>
            <person name="Miyake S."/>
            <person name="Morris K."/>
            <person name="Mottagui-Tabar S."/>
            <person name="Mulder N."/>
            <person name="Nakano N."/>
            <person name="Nakauchi H."/>
            <person name="Ng P."/>
            <person name="Nilsson R."/>
            <person name="Nishiguchi S."/>
            <person name="Nishikawa S."/>
            <person name="Nori F."/>
            <person name="Ohara O."/>
            <person name="Okazaki Y."/>
            <person name="Orlando V."/>
            <person name="Pang K.C."/>
            <person name="Pavan W.J."/>
            <person name="Pavesi G."/>
            <person name="Pesole G."/>
            <person name="Petrovsky N."/>
            <person name="Piazza S."/>
            <person name="Reed J."/>
            <person name="Reid J.F."/>
            <person name="Ring B.Z."/>
            <person name="Ringwald M."/>
            <person name="Rost B."/>
            <person name="Ruan Y."/>
            <person name="Salzberg S.L."/>
            <person name="Sandelin A."/>
            <person name="Schneider C."/>
            <person name="Schoenbach C."/>
            <person name="Sekiguchi K."/>
            <person name="Semple C.A."/>
            <person name="Seno S."/>
            <person name="Sessa L."/>
            <person name="Sheng Y."/>
            <person name="Shibata Y."/>
            <person name="Shimada H."/>
            <person name="Shimada K."/>
            <person name="Silva D."/>
            <person name="Sinclair B."/>
            <person name="Sperling S."/>
            <person name="Stupka E."/>
            <person name="Sugiura K."/>
            <person name="Sultana R."/>
            <person name="Takenaka Y."/>
            <person name="Taki K."/>
            <person name="Tammoja K."/>
            <person name="Tan S.L."/>
            <person name="Tang S."/>
            <person name="Taylor M.S."/>
            <person name="Tegner J."/>
            <person name="Teichmann S.A."/>
            <person name="Ueda H.R."/>
            <person name="van Nimwegen E."/>
            <person name="Verardo R."/>
            <person name="Wei C.L."/>
            <person name="Yagi K."/>
            <person name="Yamanishi H."/>
            <person name="Zabarovsky E."/>
            <person name="Zhu S."/>
            <person name="Zimmer A."/>
            <person name="Hide W."/>
            <person name="Bult C."/>
            <person name="Grimmond S.M."/>
            <person name="Teasdale R.D."/>
            <person name="Liu E.T."/>
            <person name="Brusic V."/>
            <person name="Quackenbush J."/>
            <person name="Wahlestedt C."/>
            <person name="Mattick J.S."/>
            <person name="Hume D.A."/>
            <person name="Kai C."/>
            <person name="Sasaki D."/>
            <person name="Tomaru Y."/>
            <person name="Fukuda S."/>
            <person name="Kanamori-Katayama M."/>
            <person name="Suzuki M."/>
            <person name="Aoki J."/>
            <person name="Arakawa T."/>
            <person name="Iida J."/>
            <person name="Imamura K."/>
            <person name="Itoh M."/>
            <person name="Kato T."/>
            <person name="Kawaji H."/>
            <person name="Kawagashira N."/>
            <person name="Kawashima T."/>
            <person name="Kojima M."/>
            <person name="Kondo S."/>
            <person name="Konno H."/>
            <person name="Nakano K."/>
            <person name="Ninomiya N."/>
            <person name="Nishio T."/>
            <person name="Okada M."/>
            <person name="Plessy C."/>
            <person name="Shibata K."/>
            <person name="Shiraki T."/>
            <person name="Suzuki S."/>
            <person name="Tagami M."/>
            <person name="Waki K."/>
            <person name="Watahiki A."/>
            <person name="Okamura-Oho Y."/>
            <person name="Suzuki H."/>
            <person name="Kawai J."/>
            <person name="Hayashizaki Y."/>
        </authorList>
    </citation>
    <scope>NUCLEOTIDE SEQUENCE [LARGE SCALE MRNA] OF 78-190</scope>
    <source>
        <strain>C57BL/6J</strain>
        <tissue>Brain</tissue>
    </source>
</reference>
<reference key="3">
    <citation type="submission" date="2000-04" db="EMBL/GenBank/DDBJ databases">
        <title>Isolation of full-length cDNA clones from mouse brain cDNA library made by oligo-capping method.</title>
        <authorList>
            <person name="Osada N."/>
            <person name="Kusuda J."/>
            <person name="Tanuma R."/>
            <person name="Ito A."/>
            <person name="Hirata M."/>
            <person name="Sugano S."/>
            <person name="Hashimoto K."/>
        </authorList>
    </citation>
    <scope>NUCLEOTIDE SEQUENCE [LARGE SCALE MRNA] OF 93-190</scope>
    <source>
        <strain>C57BL/6J</strain>
        <tissue>Brain</tissue>
    </source>
</reference>
<dbReference type="EMBL" id="AL645527">
    <property type="status" value="NOT_ANNOTATED_CDS"/>
    <property type="molecule type" value="Genomic_DNA"/>
</dbReference>
<dbReference type="EMBL" id="AK002962">
    <property type="protein sequence ID" value="BAB22482.1"/>
    <property type="status" value="ALT_INIT"/>
    <property type="molecule type" value="mRNA"/>
</dbReference>
<dbReference type="EMBL" id="AB041807">
    <property type="protein sequence ID" value="BAA95115.1"/>
    <property type="status" value="ALT_INIT"/>
    <property type="molecule type" value="mRNA"/>
</dbReference>
<dbReference type="RefSeq" id="NP_001400402.1">
    <property type="nucleotide sequence ID" value="NM_001413473.1"/>
</dbReference>
<dbReference type="FunCoup" id="Q9DCB3">
    <property type="interactions" value="16"/>
</dbReference>
<dbReference type="STRING" id="10090.ENSMUSP00000146712"/>
<dbReference type="PhosphoSitePlus" id="Q9DCB3"/>
<dbReference type="Ensembl" id="ENSMUST00000129321.2">
    <property type="protein sequence ID" value="ENSMUSP00000146712.2"/>
    <property type="gene ID" value="ENSMUSG00000043419.12"/>
</dbReference>
<dbReference type="GeneID" id="80515"/>
<dbReference type="AGR" id="MGI:1915359"/>
<dbReference type="MGI" id="MGI:1915359">
    <property type="gene designation" value="Rnf227"/>
</dbReference>
<dbReference type="VEuPathDB" id="HostDB:ENSMUSG00000043419"/>
<dbReference type="GeneTree" id="ENSGT00390000002475"/>
<dbReference type="InParanoid" id="Q9DCB3"/>
<dbReference type="OMA" id="CPRELHC"/>
<dbReference type="OrthoDB" id="252722at2759"/>
<dbReference type="ChiTaRS" id="Chd3os">
    <property type="organism name" value="mouse"/>
</dbReference>
<dbReference type="PRO" id="PR:Q9DCB3"/>
<dbReference type="Proteomes" id="UP000000589">
    <property type="component" value="Chromosome 11"/>
</dbReference>
<dbReference type="RNAct" id="Q9DCB3">
    <property type="molecule type" value="protein"/>
</dbReference>
<dbReference type="Bgee" id="ENSMUSG00000043419">
    <property type="expression patterns" value="Expressed in superior colliculus and 210 other cell types or tissues"/>
</dbReference>
<dbReference type="ExpressionAtlas" id="Q9DCB3">
    <property type="expression patterns" value="baseline and differential"/>
</dbReference>
<dbReference type="GO" id="GO:0008270">
    <property type="term" value="F:zinc ion binding"/>
    <property type="evidence" value="ECO:0007669"/>
    <property type="project" value="UniProtKB-KW"/>
</dbReference>
<dbReference type="Gene3D" id="3.30.40.10">
    <property type="entry name" value="Zinc/RING finger domain, C3HC4 (zinc finger)"/>
    <property type="match status" value="1"/>
</dbReference>
<dbReference type="InterPro" id="IPR027952">
    <property type="entry name" value="DUF4632"/>
</dbReference>
<dbReference type="InterPro" id="IPR051435">
    <property type="entry name" value="RING_finger_E3_ubiq-ligases"/>
</dbReference>
<dbReference type="InterPro" id="IPR001841">
    <property type="entry name" value="Znf_RING"/>
</dbReference>
<dbReference type="InterPro" id="IPR013083">
    <property type="entry name" value="Znf_RING/FYVE/PHD"/>
</dbReference>
<dbReference type="InterPro" id="IPR017907">
    <property type="entry name" value="Znf_RING_CS"/>
</dbReference>
<dbReference type="PANTHER" id="PTHR22791:SF14">
    <property type="entry name" value="RING FINGER PROTEIN 227"/>
    <property type="match status" value="1"/>
</dbReference>
<dbReference type="PANTHER" id="PTHR22791">
    <property type="entry name" value="RING-TYPE DOMAIN-CONTAINING PROTEIN"/>
    <property type="match status" value="1"/>
</dbReference>
<dbReference type="Pfam" id="PF15451">
    <property type="entry name" value="DUF4632"/>
    <property type="match status" value="1"/>
</dbReference>
<dbReference type="Pfam" id="PF14634">
    <property type="entry name" value="zf-RING_5"/>
    <property type="match status" value="1"/>
</dbReference>
<dbReference type="SMART" id="SM00184">
    <property type="entry name" value="RING"/>
    <property type="match status" value="1"/>
</dbReference>
<dbReference type="SUPFAM" id="SSF57850">
    <property type="entry name" value="RING/U-box"/>
    <property type="match status" value="1"/>
</dbReference>
<dbReference type="PROSITE" id="PS00518">
    <property type="entry name" value="ZF_RING_1"/>
    <property type="match status" value="1"/>
</dbReference>
<dbReference type="PROSITE" id="PS50089">
    <property type="entry name" value="ZF_RING_2"/>
    <property type="match status" value="1"/>
</dbReference>
<comment type="sequence caution" evidence="4">
    <conflict type="erroneous initiation">
        <sequence resource="EMBL-CDS" id="BAA95115"/>
    </conflict>
    <text>Truncated N-terminus.</text>
</comment>
<comment type="sequence caution" evidence="4">
    <conflict type="erroneous initiation">
        <sequence resource="EMBL-CDS" id="BAB22482"/>
    </conflict>
    <text>Truncated N-terminus.</text>
</comment>
<name>RN227_MOUSE</name>
<organism>
    <name type="scientific">Mus musculus</name>
    <name type="common">Mouse</name>
    <dbReference type="NCBI Taxonomy" id="10090"/>
    <lineage>
        <taxon>Eukaryota</taxon>
        <taxon>Metazoa</taxon>
        <taxon>Chordata</taxon>
        <taxon>Craniata</taxon>
        <taxon>Vertebrata</taxon>
        <taxon>Euteleostomi</taxon>
        <taxon>Mammalia</taxon>
        <taxon>Eutheria</taxon>
        <taxon>Euarchontoglires</taxon>
        <taxon>Glires</taxon>
        <taxon>Rodentia</taxon>
        <taxon>Myomorpha</taxon>
        <taxon>Muroidea</taxon>
        <taxon>Muridae</taxon>
        <taxon>Murinae</taxon>
        <taxon>Mus</taxon>
        <taxon>Mus</taxon>
    </lineage>
</organism>
<evidence type="ECO:0000250" key="1">
    <source>
        <dbReference type="UniProtKB" id="A6NIN4"/>
    </source>
</evidence>
<evidence type="ECO:0000255" key="2">
    <source>
        <dbReference type="PROSITE-ProRule" id="PRU00175"/>
    </source>
</evidence>
<evidence type="ECO:0000256" key="3">
    <source>
        <dbReference type="SAM" id="MobiDB-lite"/>
    </source>
</evidence>
<evidence type="ECO:0000305" key="4"/>
<evidence type="ECO:0000312" key="5">
    <source>
        <dbReference type="EMBL" id="BAA95115.1"/>
    </source>
</evidence>
<evidence type="ECO:0000312" key="6">
    <source>
        <dbReference type="MGI" id="MGI:1915359"/>
    </source>
</evidence>
<accession>Q9DCB3</accession>
<accession>A0A140LI80</accession>
<accession>Q9JJ82</accession>